<protein>
    <recommendedName>
        <fullName evidence="1">Enolase</fullName>
        <ecNumber evidence="1">4.2.1.11</ecNumber>
    </recommendedName>
    <alternativeName>
        <fullName evidence="1">2-phospho-D-glycerate hydro-lyase</fullName>
    </alternativeName>
    <alternativeName>
        <fullName evidence="1">2-phosphoglycerate dehydratase</fullName>
    </alternativeName>
</protein>
<evidence type="ECO:0000255" key="1">
    <source>
        <dbReference type="HAMAP-Rule" id="MF_00318"/>
    </source>
</evidence>
<comment type="function">
    <text evidence="1">Catalyzes the reversible conversion of 2-phosphoglycerate (2-PG) into phosphoenolpyruvate (PEP). It is essential for the degradation of carbohydrates via glycolysis.</text>
</comment>
<comment type="catalytic activity">
    <reaction evidence="1">
        <text>(2R)-2-phosphoglycerate = phosphoenolpyruvate + H2O</text>
        <dbReference type="Rhea" id="RHEA:10164"/>
        <dbReference type="ChEBI" id="CHEBI:15377"/>
        <dbReference type="ChEBI" id="CHEBI:58289"/>
        <dbReference type="ChEBI" id="CHEBI:58702"/>
        <dbReference type="EC" id="4.2.1.11"/>
    </reaction>
</comment>
<comment type="cofactor">
    <cofactor evidence="1">
        <name>Mg(2+)</name>
        <dbReference type="ChEBI" id="CHEBI:18420"/>
    </cofactor>
    <text evidence="1">Binds a second Mg(2+) ion via substrate during catalysis.</text>
</comment>
<comment type="pathway">
    <text evidence="1">Carbohydrate degradation; glycolysis; pyruvate from D-glyceraldehyde 3-phosphate: step 4/5.</text>
</comment>
<comment type="subcellular location">
    <subcellularLocation>
        <location evidence="1">Cytoplasm</location>
    </subcellularLocation>
    <subcellularLocation>
        <location evidence="1">Secreted</location>
    </subcellularLocation>
    <subcellularLocation>
        <location evidence="1">Cell surface</location>
    </subcellularLocation>
    <text evidence="1">Fractions of enolase are present in both the cytoplasm and on the cell surface.</text>
</comment>
<comment type="similarity">
    <text evidence="1">Belongs to the enolase family.</text>
</comment>
<proteinExistence type="inferred from homology"/>
<gene>
    <name evidence="1" type="primary">eno</name>
    <name type="ordered locus">Rru_A1885</name>
</gene>
<feature type="chain" id="PRO_0000267094" description="Enolase">
    <location>
        <begin position="1"/>
        <end position="425"/>
    </location>
</feature>
<feature type="active site" description="Proton donor" evidence="1">
    <location>
        <position position="205"/>
    </location>
</feature>
<feature type="active site" description="Proton acceptor" evidence="1">
    <location>
        <position position="337"/>
    </location>
</feature>
<feature type="binding site" evidence="1">
    <location>
        <position position="163"/>
    </location>
    <ligand>
        <name>(2R)-2-phosphoglycerate</name>
        <dbReference type="ChEBI" id="CHEBI:58289"/>
    </ligand>
</feature>
<feature type="binding site" evidence="1">
    <location>
        <position position="242"/>
    </location>
    <ligand>
        <name>Mg(2+)</name>
        <dbReference type="ChEBI" id="CHEBI:18420"/>
    </ligand>
</feature>
<feature type="binding site" evidence="1">
    <location>
        <position position="285"/>
    </location>
    <ligand>
        <name>Mg(2+)</name>
        <dbReference type="ChEBI" id="CHEBI:18420"/>
    </ligand>
</feature>
<feature type="binding site" evidence="1">
    <location>
        <position position="312"/>
    </location>
    <ligand>
        <name>Mg(2+)</name>
        <dbReference type="ChEBI" id="CHEBI:18420"/>
    </ligand>
</feature>
<feature type="binding site" evidence="1">
    <location>
        <position position="337"/>
    </location>
    <ligand>
        <name>(2R)-2-phosphoglycerate</name>
        <dbReference type="ChEBI" id="CHEBI:58289"/>
    </ligand>
</feature>
<feature type="binding site" evidence="1">
    <location>
        <position position="366"/>
    </location>
    <ligand>
        <name>(2R)-2-phosphoglycerate</name>
        <dbReference type="ChEBI" id="CHEBI:58289"/>
    </ligand>
</feature>
<feature type="binding site" evidence="1">
    <location>
        <position position="367"/>
    </location>
    <ligand>
        <name>(2R)-2-phosphoglycerate</name>
        <dbReference type="ChEBI" id="CHEBI:58289"/>
    </ligand>
</feature>
<feature type="binding site" evidence="1">
    <location>
        <position position="388"/>
    </location>
    <ligand>
        <name>(2R)-2-phosphoglycerate</name>
        <dbReference type="ChEBI" id="CHEBI:58289"/>
    </ligand>
</feature>
<keyword id="KW-0963">Cytoplasm</keyword>
<keyword id="KW-0324">Glycolysis</keyword>
<keyword id="KW-0456">Lyase</keyword>
<keyword id="KW-0460">Magnesium</keyword>
<keyword id="KW-0479">Metal-binding</keyword>
<keyword id="KW-1185">Reference proteome</keyword>
<keyword id="KW-0964">Secreted</keyword>
<dbReference type="EC" id="4.2.1.11" evidence="1"/>
<dbReference type="EMBL" id="CP000230">
    <property type="protein sequence ID" value="ABC22685.1"/>
    <property type="molecule type" value="Genomic_DNA"/>
</dbReference>
<dbReference type="RefSeq" id="WP_011389638.1">
    <property type="nucleotide sequence ID" value="NC_007643.1"/>
</dbReference>
<dbReference type="RefSeq" id="YP_426972.1">
    <property type="nucleotide sequence ID" value="NC_007643.1"/>
</dbReference>
<dbReference type="SMR" id="Q2RT60"/>
<dbReference type="STRING" id="269796.Rru_A1885"/>
<dbReference type="EnsemblBacteria" id="ABC22685">
    <property type="protein sequence ID" value="ABC22685"/>
    <property type="gene ID" value="Rru_A1885"/>
</dbReference>
<dbReference type="KEGG" id="rru:Rru_A1885"/>
<dbReference type="PATRIC" id="fig|269796.9.peg.1965"/>
<dbReference type="eggNOG" id="COG0148">
    <property type="taxonomic scope" value="Bacteria"/>
</dbReference>
<dbReference type="HOGENOM" id="CLU_031223_2_1_5"/>
<dbReference type="PhylomeDB" id="Q2RT60"/>
<dbReference type="UniPathway" id="UPA00109">
    <property type="reaction ID" value="UER00187"/>
</dbReference>
<dbReference type="Proteomes" id="UP000001929">
    <property type="component" value="Chromosome"/>
</dbReference>
<dbReference type="GO" id="GO:0009986">
    <property type="term" value="C:cell surface"/>
    <property type="evidence" value="ECO:0007669"/>
    <property type="project" value="UniProtKB-SubCell"/>
</dbReference>
<dbReference type="GO" id="GO:0005576">
    <property type="term" value="C:extracellular region"/>
    <property type="evidence" value="ECO:0007669"/>
    <property type="project" value="UniProtKB-SubCell"/>
</dbReference>
<dbReference type="GO" id="GO:0000015">
    <property type="term" value="C:phosphopyruvate hydratase complex"/>
    <property type="evidence" value="ECO:0007669"/>
    <property type="project" value="InterPro"/>
</dbReference>
<dbReference type="GO" id="GO:0000287">
    <property type="term" value="F:magnesium ion binding"/>
    <property type="evidence" value="ECO:0007669"/>
    <property type="project" value="UniProtKB-UniRule"/>
</dbReference>
<dbReference type="GO" id="GO:0004634">
    <property type="term" value="F:phosphopyruvate hydratase activity"/>
    <property type="evidence" value="ECO:0007669"/>
    <property type="project" value="UniProtKB-UniRule"/>
</dbReference>
<dbReference type="GO" id="GO:0006096">
    <property type="term" value="P:glycolytic process"/>
    <property type="evidence" value="ECO:0007669"/>
    <property type="project" value="UniProtKB-UniRule"/>
</dbReference>
<dbReference type="CDD" id="cd03313">
    <property type="entry name" value="enolase"/>
    <property type="match status" value="1"/>
</dbReference>
<dbReference type="FunFam" id="3.20.20.120:FF:000001">
    <property type="entry name" value="Enolase"/>
    <property type="match status" value="1"/>
</dbReference>
<dbReference type="FunFam" id="3.30.390.10:FF:000001">
    <property type="entry name" value="Enolase"/>
    <property type="match status" value="1"/>
</dbReference>
<dbReference type="Gene3D" id="3.20.20.120">
    <property type="entry name" value="Enolase-like C-terminal domain"/>
    <property type="match status" value="1"/>
</dbReference>
<dbReference type="Gene3D" id="3.30.390.10">
    <property type="entry name" value="Enolase-like, N-terminal domain"/>
    <property type="match status" value="1"/>
</dbReference>
<dbReference type="HAMAP" id="MF_00318">
    <property type="entry name" value="Enolase"/>
    <property type="match status" value="1"/>
</dbReference>
<dbReference type="InterPro" id="IPR000941">
    <property type="entry name" value="Enolase"/>
</dbReference>
<dbReference type="InterPro" id="IPR036849">
    <property type="entry name" value="Enolase-like_C_sf"/>
</dbReference>
<dbReference type="InterPro" id="IPR029017">
    <property type="entry name" value="Enolase-like_N"/>
</dbReference>
<dbReference type="InterPro" id="IPR020810">
    <property type="entry name" value="Enolase_C"/>
</dbReference>
<dbReference type="InterPro" id="IPR020809">
    <property type="entry name" value="Enolase_CS"/>
</dbReference>
<dbReference type="InterPro" id="IPR020811">
    <property type="entry name" value="Enolase_N"/>
</dbReference>
<dbReference type="NCBIfam" id="TIGR01060">
    <property type="entry name" value="eno"/>
    <property type="match status" value="1"/>
</dbReference>
<dbReference type="PANTHER" id="PTHR11902">
    <property type="entry name" value="ENOLASE"/>
    <property type="match status" value="1"/>
</dbReference>
<dbReference type="PANTHER" id="PTHR11902:SF1">
    <property type="entry name" value="ENOLASE"/>
    <property type="match status" value="1"/>
</dbReference>
<dbReference type="Pfam" id="PF00113">
    <property type="entry name" value="Enolase_C"/>
    <property type="match status" value="1"/>
</dbReference>
<dbReference type="Pfam" id="PF03952">
    <property type="entry name" value="Enolase_N"/>
    <property type="match status" value="1"/>
</dbReference>
<dbReference type="PIRSF" id="PIRSF001400">
    <property type="entry name" value="Enolase"/>
    <property type="match status" value="1"/>
</dbReference>
<dbReference type="PRINTS" id="PR00148">
    <property type="entry name" value="ENOLASE"/>
</dbReference>
<dbReference type="SFLD" id="SFLDS00001">
    <property type="entry name" value="Enolase"/>
    <property type="match status" value="1"/>
</dbReference>
<dbReference type="SFLD" id="SFLDF00002">
    <property type="entry name" value="enolase"/>
    <property type="match status" value="1"/>
</dbReference>
<dbReference type="SMART" id="SM01192">
    <property type="entry name" value="Enolase_C"/>
    <property type="match status" value="1"/>
</dbReference>
<dbReference type="SMART" id="SM01193">
    <property type="entry name" value="Enolase_N"/>
    <property type="match status" value="1"/>
</dbReference>
<dbReference type="SUPFAM" id="SSF51604">
    <property type="entry name" value="Enolase C-terminal domain-like"/>
    <property type="match status" value="1"/>
</dbReference>
<dbReference type="SUPFAM" id="SSF54826">
    <property type="entry name" value="Enolase N-terminal domain-like"/>
    <property type="match status" value="1"/>
</dbReference>
<dbReference type="PROSITE" id="PS00164">
    <property type="entry name" value="ENOLASE"/>
    <property type="match status" value="1"/>
</dbReference>
<organism>
    <name type="scientific">Rhodospirillum rubrum (strain ATCC 11170 / ATH 1.1.1 / DSM 467 / LMG 4362 / NCIMB 8255 / S1)</name>
    <dbReference type="NCBI Taxonomy" id="269796"/>
    <lineage>
        <taxon>Bacteria</taxon>
        <taxon>Pseudomonadati</taxon>
        <taxon>Pseudomonadota</taxon>
        <taxon>Alphaproteobacteria</taxon>
        <taxon>Rhodospirillales</taxon>
        <taxon>Rhodospirillaceae</taxon>
        <taxon>Rhodospirillum</taxon>
    </lineage>
</organism>
<name>ENO_RHORT</name>
<reference key="1">
    <citation type="journal article" date="2011" name="Stand. Genomic Sci.">
        <title>Complete genome sequence of Rhodospirillum rubrum type strain (S1).</title>
        <authorList>
            <person name="Munk A.C."/>
            <person name="Copeland A."/>
            <person name="Lucas S."/>
            <person name="Lapidus A."/>
            <person name="Del Rio T.G."/>
            <person name="Barry K."/>
            <person name="Detter J.C."/>
            <person name="Hammon N."/>
            <person name="Israni S."/>
            <person name="Pitluck S."/>
            <person name="Brettin T."/>
            <person name="Bruce D."/>
            <person name="Han C."/>
            <person name="Tapia R."/>
            <person name="Gilna P."/>
            <person name="Schmutz J."/>
            <person name="Larimer F."/>
            <person name="Land M."/>
            <person name="Kyrpides N.C."/>
            <person name="Mavromatis K."/>
            <person name="Richardson P."/>
            <person name="Rohde M."/>
            <person name="Goeker M."/>
            <person name="Klenk H.P."/>
            <person name="Zhang Y."/>
            <person name="Roberts G.P."/>
            <person name="Reslewic S."/>
            <person name="Schwartz D.C."/>
        </authorList>
    </citation>
    <scope>NUCLEOTIDE SEQUENCE [LARGE SCALE GENOMIC DNA]</scope>
    <source>
        <strain>ATCC 11170 / ATH 1.1.1 / DSM 467 / LMG 4362 / NCIMB 8255 / S1</strain>
    </source>
</reference>
<accession>Q2RT60</accession>
<sequence length="425" mass="44766">MAEIIDIHAREILDSRGNPTVEVDVLLDSGAFGRAAVPSGASTGAHEAVELRDGDKTRYAGKGVLKAVEAVNGELFSALSGLDATDQLLIDQAMIDLDGTPNKARLGANAILGVSLACAKAAAEEAELPLYRYIGGARSHILPVPMMNIINGGQHADNPIDVQEFMIMPVSAPTVADAVRMGAEVFHALKKKLKDAGHNTNVGDEGGFAPNLASADEALAFIVKAIEAAGYKAGEDIVLALDAASSEFYKDGKYVLAGEGKTLDAEGMVKYYAELCKRYPILSIEDGCAEDDWAGWSLLTAELGAKVQLVGDDLFVTNPLRLAEGIRKGVANSILVKVNQIGTLSETLEAVEMAHKAGYTSVLSHRSGETEDSTIADIAVATNCGQIKTGSLSRSDRLAKYNQLIRIEEELGPVAVYAGASILRG</sequence>